<reference key="1">
    <citation type="journal article" date="1998" name="DNA Res.">
        <title>Structural analysis of Arabidopsis thaliana chromosome 5. VIII. Sequence features of the regions of 1,081,958 bp covered by seventeen physically assigned P1 and TAC clones.</title>
        <authorList>
            <person name="Asamizu E."/>
            <person name="Sato S."/>
            <person name="Kaneko T."/>
            <person name="Nakamura Y."/>
            <person name="Kotani H."/>
            <person name="Miyajima N."/>
            <person name="Tabata S."/>
        </authorList>
    </citation>
    <scope>NUCLEOTIDE SEQUENCE [LARGE SCALE GENOMIC DNA]</scope>
    <source>
        <strain>cv. Columbia</strain>
    </source>
</reference>
<reference key="2">
    <citation type="journal article" date="2017" name="Plant J.">
        <title>Araport11: a complete reannotation of the Arabidopsis thaliana reference genome.</title>
        <authorList>
            <person name="Cheng C.Y."/>
            <person name="Krishnakumar V."/>
            <person name="Chan A.P."/>
            <person name="Thibaud-Nissen F."/>
            <person name="Schobel S."/>
            <person name="Town C.D."/>
        </authorList>
    </citation>
    <scope>GENOME REANNOTATION</scope>
    <source>
        <strain>cv. Columbia</strain>
    </source>
</reference>
<reference key="3">
    <citation type="journal article" date="2000" name="Plant Cell Physiol.">
        <title>Genes encoding pseudo-response regulators: insight into His-to-Asp phosphorelay and circadian rhythm in Arabidopsis thaliana.</title>
        <authorList>
            <person name="Makino S."/>
            <person name="Kiba T."/>
            <person name="Imamura A."/>
            <person name="Hanaki N."/>
            <person name="Nakamura A."/>
            <person name="Suzuki T."/>
            <person name="Taniguchi M."/>
            <person name="Ueguchi C."/>
            <person name="Sugiyama T."/>
            <person name="Mizuno T."/>
        </authorList>
    </citation>
    <scope>GENE FAMILY</scope>
</reference>
<gene>
    <name type="primary">APRR4</name>
    <name type="ordered locus">At5g49240</name>
    <name type="ORF">K21P3.12</name>
</gene>
<feature type="chain" id="PRO_0000132305" description="Putative two-component response regulator-like APRR4">
    <location>
        <begin position="1"/>
        <end position="292"/>
    </location>
</feature>
<feature type="domain" description="Response regulatory" evidence="2">
    <location>
        <begin position="43"/>
        <end position="158"/>
    </location>
</feature>
<feature type="DNA-binding region" description="Myb-like GARP">
    <location>
        <begin position="225"/>
        <end position="275"/>
    </location>
</feature>
<feature type="region of interest" description="Disordered" evidence="3">
    <location>
        <begin position="168"/>
        <end position="215"/>
    </location>
</feature>
<feature type="compositionally biased region" description="Polar residues" evidence="3">
    <location>
        <begin position="179"/>
        <end position="191"/>
    </location>
</feature>
<accession>Q9FJ16</accession>
<keyword id="KW-0238">DNA-binding</keyword>
<keyword id="KW-0539">Nucleus</keyword>
<keyword id="KW-1185">Reference proteome</keyword>
<keyword id="KW-0804">Transcription</keyword>
<keyword id="KW-0805">Transcription regulation</keyword>
<keyword id="KW-0902">Two-component regulatory system</keyword>
<sequence>MQPLNMAEILDHRGVLTDGDDGPFRNLTNFYDMFSSNFPEGLRVLVFDEDPSYLLILERHLQKFQYQVTICNEVNKAMHTLRNHRNRFDLAMIQVNNAEGDIFRFLSEIGSEMDLPIIIISEDDSVKSVKKWMINGAADYLIKPIRPEDLRIVFKHLVKKMRERRSVVTGEAEKAAGEKSSSVGDSTIRNPNKSKRSSCLEAEVNEEDRHDHNDRACASSAKKRRVVWDEELHQNFLNAVDFLGLERAVPKKILDVMKVDYISRENVASHLQVTFLIYNIIVHFQQHFCFYS</sequence>
<evidence type="ECO:0000250" key="1"/>
<evidence type="ECO:0000255" key="2">
    <source>
        <dbReference type="PROSITE-ProRule" id="PRU00169"/>
    </source>
</evidence>
<evidence type="ECO:0000256" key="3">
    <source>
        <dbReference type="SAM" id="MobiDB-lite"/>
    </source>
</evidence>
<evidence type="ECO:0000305" key="4"/>
<name>APRR4_ARATH</name>
<organism>
    <name type="scientific">Arabidopsis thaliana</name>
    <name type="common">Mouse-ear cress</name>
    <dbReference type="NCBI Taxonomy" id="3702"/>
    <lineage>
        <taxon>Eukaryota</taxon>
        <taxon>Viridiplantae</taxon>
        <taxon>Streptophyta</taxon>
        <taxon>Embryophyta</taxon>
        <taxon>Tracheophyta</taxon>
        <taxon>Spermatophyta</taxon>
        <taxon>Magnoliopsida</taxon>
        <taxon>eudicotyledons</taxon>
        <taxon>Gunneridae</taxon>
        <taxon>Pentapetalae</taxon>
        <taxon>rosids</taxon>
        <taxon>malvids</taxon>
        <taxon>Brassicales</taxon>
        <taxon>Brassicaceae</taxon>
        <taxon>Camelineae</taxon>
        <taxon>Arabidopsis</taxon>
    </lineage>
</organism>
<comment type="function">
    <text evidence="1">Transcriptional activator that binds specifically to the DNA sequence 5'-[AG]GATT-3'.</text>
</comment>
<comment type="subunit">
    <text evidence="1">Binds the target DNA as a monomer.</text>
</comment>
<comment type="subcellular location">
    <subcellularLocation>
        <location evidence="4">Nucleus</location>
    </subcellularLocation>
</comment>
<comment type="similarity">
    <text evidence="4">Belongs to the ARR-like family.</text>
</comment>
<comment type="caution">
    <text evidence="4">Lacks the phospho-accepting Asp (here Gln-94), present in the receiver domain, which is one of the conserved features of the two-component response regulators (ARRs) family.</text>
</comment>
<proteinExistence type="inferred from homology"/>
<dbReference type="EMBL" id="AB016872">
    <property type="protein sequence ID" value="BAB10342.1"/>
    <property type="molecule type" value="Genomic_DNA"/>
</dbReference>
<dbReference type="EMBL" id="CP002688">
    <property type="protein sequence ID" value="AED95788.1"/>
    <property type="molecule type" value="Genomic_DNA"/>
</dbReference>
<dbReference type="RefSeq" id="NP_199735.1">
    <property type="nucleotide sequence ID" value="NM_124301.1"/>
</dbReference>
<dbReference type="SMR" id="Q9FJ16"/>
<dbReference type="FunCoup" id="Q9FJ16">
    <property type="interactions" value="292"/>
</dbReference>
<dbReference type="STRING" id="3702.Q9FJ16"/>
<dbReference type="PaxDb" id="3702-AT5G49240.1"/>
<dbReference type="EnsemblPlants" id="AT5G49240.1">
    <property type="protein sequence ID" value="AT5G49240.1"/>
    <property type="gene ID" value="AT5G49240"/>
</dbReference>
<dbReference type="GeneID" id="834984"/>
<dbReference type="Gramene" id="AT5G49240.1">
    <property type="protein sequence ID" value="AT5G49240.1"/>
    <property type="gene ID" value="AT5G49240"/>
</dbReference>
<dbReference type="KEGG" id="ath:AT5G49240"/>
<dbReference type="Araport" id="AT5G49240"/>
<dbReference type="TAIR" id="AT5G49240">
    <property type="gene designation" value="APRR4"/>
</dbReference>
<dbReference type="eggNOG" id="KOG1601">
    <property type="taxonomic scope" value="Eukaryota"/>
</dbReference>
<dbReference type="HOGENOM" id="CLU_061273_1_0_1"/>
<dbReference type="InParanoid" id="Q9FJ16"/>
<dbReference type="OMA" id="HNDRACA"/>
<dbReference type="PhylomeDB" id="Q9FJ16"/>
<dbReference type="PRO" id="PR:Q9FJ16"/>
<dbReference type="Proteomes" id="UP000006548">
    <property type="component" value="Chromosome 5"/>
</dbReference>
<dbReference type="ExpressionAtlas" id="Q9FJ16">
    <property type="expression patterns" value="baseline and differential"/>
</dbReference>
<dbReference type="GO" id="GO:0005634">
    <property type="term" value="C:nucleus"/>
    <property type="evidence" value="ECO:0007669"/>
    <property type="project" value="UniProtKB-SubCell"/>
</dbReference>
<dbReference type="GO" id="GO:0003677">
    <property type="term" value="F:DNA binding"/>
    <property type="evidence" value="ECO:0007669"/>
    <property type="project" value="UniProtKB-KW"/>
</dbReference>
<dbReference type="GO" id="GO:0003700">
    <property type="term" value="F:DNA-binding transcription factor activity"/>
    <property type="evidence" value="ECO:0000250"/>
    <property type="project" value="TAIR"/>
</dbReference>
<dbReference type="GO" id="GO:0009736">
    <property type="term" value="P:cytokinin-activated signaling pathway"/>
    <property type="evidence" value="ECO:0007669"/>
    <property type="project" value="InterPro"/>
</dbReference>
<dbReference type="GO" id="GO:0000160">
    <property type="term" value="P:phosphorelay signal transduction system"/>
    <property type="evidence" value="ECO:0007669"/>
    <property type="project" value="UniProtKB-KW"/>
</dbReference>
<dbReference type="CDD" id="cd17584">
    <property type="entry name" value="REC_typeB_ARR-like"/>
    <property type="match status" value="1"/>
</dbReference>
<dbReference type="FunFam" id="1.10.10.60:FF:000007">
    <property type="entry name" value="Two-component response regulator"/>
    <property type="match status" value="1"/>
</dbReference>
<dbReference type="Gene3D" id="3.40.50.2300">
    <property type="match status" value="1"/>
</dbReference>
<dbReference type="Gene3D" id="1.10.10.60">
    <property type="entry name" value="Homeodomain-like"/>
    <property type="match status" value="1"/>
</dbReference>
<dbReference type="InterPro" id="IPR045279">
    <property type="entry name" value="ARR-like"/>
</dbReference>
<dbReference type="InterPro" id="IPR011006">
    <property type="entry name" value="CheY-like_superfamily"/>
</dbReference>
<dbReference type="InterPro" id="IPR009057">
    <property type="entry name" value="Homeodomain-like_sf"/>
</dbReference>
<dbReference type="InterPro" id="IPR006447">
    <property type="entry name" value="Myb_dom_plants"/>
</dbReference>
<dbReference type="InterPro" id="IPR001789">
    <property type="entry name" value="Sig_transdc_resp-reg_receiver"/>
</dbReference>
<dbReference type="NCBIfam" id="TIGR01557">
    <property type="entry name" value="myb_SHAQKYF"/>
    <property type="match status" value="1"/>
</dbReference>
<dbReference type="PANTHER" id="PTHR43874">
    <property type="entry name" value="TWO-COMPONENT RESPONSE REGULATOR"/>
    <property type="match status" value="1"/>
</dbReference>
<dbReference type="PANTHER" id="PTHR43874:SF194">
    <property type="entry name" value="TWO-COMPONENT RESPONSE REGULATOR-LIKE APRR4-RELATED"/>
    <property type="match status" value="1"/>
</dbReference>
<dbReference type="Pfam" id="PF00072">
    <property type="entry name" value="Response_reg"/>
    <property type="match status" value="1"/>
</dbReference>
<dbReference type="SMART" id="SM00448">
    <property type="entry name" value="REC"/>
    <property type="match status" value="1"/>
</dbReference>
<dbReference type="SUPFAM" id="SSF52172">
    <property type="entry name" value="CheY-like"/>
    <property type="match status" value="1"/>
</dbReference>
<dbReference type="SUPFAM" id="SSF46689">
    <property type="entry name" value="Homeodomain-like"/>
    <property type="match status" value="1"/>
</dbReference>
<dbReference type="PROSITE" id="PS50110">
    <property type="entry name" value="RESPONSE_REGULATORY"/>
    <property type="match status" value="1"/>
</dbReference>
<protein>
    <recommendedName>
        <fullName>Putative two-component response regulator-like APRR4</fullName>
    </recommendedName>
    <alternativeName>
        <fullName>Pseudo-response regulator 4</fullName>
    </alternativeName>
</protein>